<sequence>MLMRQKGIIIKAVDYGESDKIITILNEHGAKVPLMARRAKKVKTGLQAQTQLFVYGLFIYNQWRGMGTLNSVDVISQHYKLQMDLYVSSYASLAAETIERSMDEGDIAPYNYQLLQFVLEKIESGTSAQLMSVVVMLKCMKRFGFTASFNRCAVSGNDTQADLIGYSFKFDGAISRQEASKDVHAVILSNKTLYLLDVLQKLPIDKMNSLNIHQEIIDEMSEIILMLYREYAGMFFKSQKLINQLKRLEQ</sequence>
<proteinExistence type="inferred from homology"/>
<dbReference type="EMBL" id="AJ938182">
    <property type="protein sequence ID" value="CAI81127.1"/>
    <property type="molecule type" value="Genomic_DNA"/>
</dbReference>
<dbReference type="SMR" id="Q2YT13"/>
<dbReference type="KEGG" id="sab:SAB1438c"/>
<dbReference type="HOGENOM" id="CLU_066632_4_0_9"/>
<dbReference type="GO" id="GO:0043590">
    <property type="term" value="C:bacterial nucleoid"/>
    <property type="evidence" value="ECO:0007669"/>
    <property type="project" value="TreeGrafter"/>
</dbReference>
<dbReference type="GO" id="GO:0006310">
    <property type="term" value="P:DNA recombination"/>
    <property type="evidence" value="ECO:0007669"/>
    <property type="project" value="UniProtKB-UniRule"/>
</dbReference>
<dbReference type="GO" id="GO:0006302">
    <property type="term" value="P:double-strand break repair"/>
    <property type="evidence" value="ECO:0007669"/>
    <property type="project" value="TreeGrafter"/>
</dbReference>
<dbReference type="Gene3D" id="2.40.50.140">
    <property type="entry name" value="Nucleic acid-binding proteins"/>
    <property type="match status" value="1"/>
</dbReference>
<dbReference type="Gene3D" id="1.20.1440.120">
    <property type="entry name" value="Recombination protein O, C-terminal domain"/>
    <property type="match status" value="1"/>
</dbReference>
<dbReference type="HAMAP" id="MF_00201">
    <property type="entry name" value="RecO"/>
    <property type="match status" value="1"/>
</dbReference>
<dbReference type="InterPro" id="IPR037278">
    <property type="entry name" value="ARFGAP/RecO"/>
</dbReference>
<dbReference type="InterPro" id="IPR022572">
    <property type="entry name" value="DNA_rep/recomb_RecO_N"/>
</dbReference>
<dbReference type="InterPro" id="IPR012340">
    <property type="entry name" value="NA-bd_OB-fold"/>
</dbReference>
<dbReference type="InterPro" id="IPR003717">
    <property type="entry name" value="RecO"/>
</dbReference>
<dbReference type="InterPro" id="IPR042242">
    <property type="entry name" value="RecO_C"/>
</dbReference>
<dbReference type="NCBIfam" id="TIGR00613">
    <property type="entry name" value="reco"/>
    <property type="match status" value="1"/>
</dbReference>
<dbReference type="PANTHER" id="PTHR33991">
    <property type="entry name" value="DNA REPAIR PROTEIN RECO"/>
    <property type="match status" value="1"/>
</dbReference>
<dbReference type="PANTHER" id="PTHR33991:SF1">
    <property type="entry name" value="DNA REPAIR PROTEIN RECO"/>
    <property type="match status" value="1"/>
</dbReference>
<dbReference type="Pfam" id="PF02565">
    <property type="entry name" value="RecO_C"/>
    <property type="match status" value="1"/>
</dbReference>
<dbReference type="Pfam" id="PF11967">
    <property type="entry name" value="RecO_N"/>
    <property type="match status" value="1"/>
</dbReference>
<dbReference type="SUPFAM" id="SSF57863">
    <property type="entry name" value="ArfGap/RecO-like zinc finger"/>
    <property type="match status" value="1"/>
</dbReference>
<dbReference type="SUPFAM" id="SSF50249">
    <property type="entry name" value="Nucleic acid-binding proteins"/>
    <property type="match status" value="1"/>
</dbReference>
<keyword id="KW-0227">DNA damage</keyword>
<keyword id="KW-0233">DNA recombination</keyword>
<keyword id="KW-0234">DNA repair</keyword>
<accession>Q2YT13</accession>
<evidence type="ECO:0000255" key="1">
    <source>
        <dbReference type="HAMAP-Rule" id="MF_00201"/>
    </source>
</evidence>
<name>RECO_STAAB</name>
<reference key="1">
    <citation type="journal article" date="2007" name="PLoS ONE">
        <title>Molecular correlates of host specialization in Staphylococcus aureus.</title>
        <authorList>
            <person name="Herron-Olson L."/>
            <person name="Fitzgerald J.R."/>
            <person name="Musser J.M."/>
            <person name="Kapur V."/>
        </authorList>
    </citation>
    <scope>NUCLEOTIDE SEQUENCE [LARGE SCALE GENOMIC DNA]</scope>
    <source>
        <strain>bovine RF122 / ET3-1</strain>
    </source>
</reference>
<feature type="chain" id="PRO_0000264845" description="DNA repair protein RecO">
    <location>
        <begin position="1"/>
        <end position="250"/>
    </location>
</feature>
<gene>
    <name evidence="1" type="primary">recO</name>
    <name type="ordered locus">SAB1438c</name>
</gene>
<comment type="function">
    <text evidence="1">Involved in DNA repair and RecF pathway recombination.</text>
</comment>
<comment type="similarity">
    <text evidence="1">Belongs to the RecO family.</text>
</comment>
<organism>
    <name type="scientific">Staphylococcus aureus (strain bovine RF122 / ET3-1)</name>
    <dbReference type="NCBI Taxonomy" id="273036"/>
    <lineage>
        <taxon>Bacteria</taxon>
        <taxon>Bacillati</taxon>
        <taxon>Bacillota</taxon>
        <taxon>Bacilli</taxon>
        <taxon>Bacillales</taxon>
        <taxon>Staphylococcaceae</taxon>
        <taxon>Staphylococcus</taxon>
    </lineage>
</organism>
<protein>
    <recommendedName>
        <fullName evidence="1">DNA repair protein RecO</fullName>
    </recommendedName>
    <alternativeName>
        <fullName evidence="1">Recombination protein O</fullName>
    </alternativeName>
</protein>